<name>HEM3_TRIL1</name>
<reference key="1">
    <citation type="submission" date="2008-05" db="EMBL/GenBank/DDBJ databases">
        <title>Complete sequence of chromosome of Geobacter lovleyi SZ.</title>
        <authorList>
            <consortium name="US DOE Joint Genome Institute"/>
            <person name="Lucas S."/>
            <person name="Copeland A."/>
            <person name="Lapidus A."/>
            <person name="Glavina del Rio T."/>
            <person name="Dalin E."/>
            <person name="Tice H."/>
            <person name="Bruce D."/>
            <person name="Goodwin L."/>
            <person name="Pitluck S."/>
            <person name="Chertkov O."/>
            <person name="Meincke L."/>
            <person name="Brettin T."/>
            <person name="Detter J.C."/>
            <person name="Han C."/>
            <person name="Tapia R."/>
            <person name="Kuske C.R."/>
            <person name="Schmutz J."/>
            <person name="Larimer F."/>
            <person name="Land M."/>
            <person name="Hauser L."/>
            <person name="Kyrpides N."/>
            <person name="Mikhailova N."/>
            <person name="Sung Y."/>
            <person name="Fletcher K.E."/>
            <person name="Ritalahti K.M."/>
            <person name="Loeffler F.E."/>
            <person name="Richardson P."/>
        </authorList>
    </citation>
    <scope>NUCLEOTIDE SEQUENCE [LARGE SCALE GENOMIC DNA]</scope>
    <source>
        <strain>ATCC BAA-1151 / DSM 17278 / SZ</strain>
    </source>
</reference>
<accession>B3E2H7</accession>
<comment type="function">
    <text evidence="1">Tetrapolymerization of the monopyrrole PBG into the hydroxymethylbilane pre-uroporphyrinogen in several discrete steps.</text>
</comment>
<comment type="catalytic activity">
    <reaction evidence="1">
        <text>4 porphobilinogen + H2O = hydroxymethylbilane + 4 NH4(+)</text>
        <dbReference type="Rhea" id="RHEA:13185"/>
        <dbReference type="ChEBI" id="CHEBI:15377"/>
        <dbReference type="ChEBI" id="CHEBI:28938"/>
        <dbReference type="ChEBI" id="CHEBI:57845"/>
        <dbReference type="ChEBI" id="CHEBI:58126"/>
        <dbReference type="EC" id="2.5.1.61"/>
    </reaction>
</comment>
<comment type="cofactor">
    <cofactor evidence="1">
        <name>dipyrromethane</name>
        <dbReference type="ChEBI" id="CHEBI:60342"/>
    </cofactor>
    <text evidence="1">Binds 1 dipyrromethane group covalently.</text>
</comment>
<comment type="pathway">
    <text evidence="1">Porphyrin-containing compound metabolism; protoporphyrin-IX biosynthesis; coproporphyrinogen-III from 5-aminolevulinate: step 2/4.</text>
</comment>
<comment type="subunit">
    <text evidence="1">Monomer.</text>
</comment>
<comment type="miscellaneous">
    <text evidence="1">The porphobilinogen subunits are added to the dipyrromethane group.</text>
</comment>
<comment type="similarity">
    <text evidence="1">Belongs to the HMBS family.</text>
</comment>
<gene>
    <name evidence="1" type="primary">hemC</name>
    <name type="ordered locus">Glov_0502</name>
</gene>
<evidence type="ECO:0000255" key="1">
    <source>
        <dbReference type="HAMAP-Rule" id="MF_00260"/>
    </source>
</evidence>
<protein>
    <recommendedName>
        <fullName evidence="1">Porphobilinogen deaminase</fullName>
        <shortName evidence="1">PBG</shortName>
        <ecNumber evidence="1">2.5.1.61</ecNumber>
    </recommendedName>
    <alternativeName>
        <fullName evidence="1">Hydroxymethylbilane synthase</fullName>
        <shortName evidence="1">HMBS</shortName>
    </alternativeName>
    <alternativeName>
        <fullName evidence="1">Pre-uroporphyrinogen synthase</fullName>
    </alternativeName>
</protein>
<proteinExistence type="inferred from homology"/>
<keyword id="KW-0627">Porphyrin biosynthesis</keyword>
<keyword id="KW-1185">Reference proteome</keyword>
<keyword id="KW-0808">Transferase</keyword>
<sequence>MAPKRLRIGTRASQLALWQANWTKSELEARYPGIQVELVKIKTMGDKILDVPLAQVGGKGLFVKEIEEAMLRGEIDLAVHSMKDVPTEFPEGLGLVVTTKREDPRDAFISDKVTFSELRQGARIGTSALRRQAQLLKARPDLEMVIIRGNVETRIRKLKEDNLDAVILAAAGLNRLGFTDVVTELLDTDFSIPAIGQGALGLECRLDDNATIEALAFLNHADTAAAVAAERALLKRCEGGCQVPIAAHGTVSGDTLTLVGFIASVDGKQTVRDRISGSTADAVKLGTELADRLLAAGGKAILEDVYQREIAH</sequence>
<dbReference type="EC" id="2.5.1.61" evidence="1"/>
<dbReference type="EMBL" id="CP001089">
    <property type="protein sequence ID" value="ACD94230.1"/>
    <property type="molecule type" value="Genomic_DNA"/>
</dbReference>
<dbReference type="RefSeq" id="WP_012468586.1">
    <property type="nucleotide sequence ID" value="NC_010814.1"/>
</dbReference>
<dbReference type="SMR" id="B3E2H7"/>
<dbReference type="STRING" id="398767.Glov_0502"/>
<dbReference type="KEGG" id="glo:Glov_0502"/>
<dbReference type="eggNOG" id="COG0181">
    <property type="taxonomic scope" value="Bacteria"/>
</dbReference>
<dbReference type="HOGENOM" id="CLU_019704_0_2_7"/>
<dbReference type="OrthoDB" id="9810298at2"/>
<dbReference type="UniPathway" id="UPA00251">
    <property type="reaction ID" value="UER00319"/>
</dbReference>
<dbReference type="Proteomes" id="UP000002420">
    <property type="component" value="Chromosome"/>
</dbReference>
<dbReference type="GO" id="GO:0005737">
    <property type="term" value="C:cytoplasm"/>
    <property type="evidence" value="ECO:0007669"/>
    <property type="project" value="TreeGrafter"/>
</dbReference>
<dbReference type="GO" id="GO:0004418">
    <property type="term" value="F:hydroxymethylbilane synthase activity"/>
    <property type="evidence" value="ECO:0007669"/>
    <property type="project" value="UniProtKB-UniRule"/>
</dbReference>
<dbReference type="GO" id="GO:0006782">
    <property type="term" value="P:protoporphyrinogen IX biosynthetic process"/>
    <property type="evidence" value="ECO:0007669"/>
    <property type="project" value="UniProtKB-UniRule"/>
</dbReference>
<dbReference type="CDD" id="cd13646">
    <property type="entry name" value="PBP2_EcHMBS_like"/>
    <property type="match status" value="1"/>
</dbReference>
<dbReference type="FunFam" id="3.30.160.40:FF:000002">
    <property type="entry name" value="Porphobilinogen deaminase"/>
    <property type="match status" value="1"/>
</dbReference>
<dbReference type="FunFam" id="3.40.190.10:FF:000004">
    <property type="entry name" value="Porphobilinogen deaminase"/>
    <property type="match status" value="1"/>
</dbReference>
<dbReference type="FunFam" id="3.40.190.10:FF:000005">
    <property type="entry name" value="Porphobilinogen deaminase"/>
    <property type="match status" value="1"/>
</dbReference>
<dbReference type="Gene3D" id="3.40.190.10">
    <property type="entry name" value="Periplasmic binding protein-like II"/>
    <property type="match status" value="2"/>
</dbReference>
<dbReference type="Gene3D" id="3.30.160.40">
    <property type="entry name" value="Porphobilinogen deaminase, C-terminal domain"/>
    <property type="match status" value="1"/>
</dbReference>
<dbReference type="HAMAP" id="MF_00260">
    <property type="entry name" value="Porphobil_deam"/>
    <property type="match status" value="1"/>
</dbReference>
<dbReference type="InterPro" id="IPR000860">
    <property type="entry name" value="HemC"/>
</dbReference>
<dbReference type="InterPro" id="IPR022419">
    <property type="entry name" value="Porphobilin_deaminase_cofac_BS"/>
</dbReference>
<dbReference type="InterPro" id="IPR022417">
    <property type="entry name" value="Porphobilin_deaminase_N"/>
</dbReference>
<dbReference type="InterPro" id="IPR022418">
    <property type="entry name" value="Porphobilinogen_deaminase_C"/>
</dbReference>
<dbReference type="InterPro" id="IPR036803">
    <property type="entry name" value="Porphobilinogen_deaminase_C_sf"/>
</dbReference>
<dbReference type="NCBIfam" id="TIGR00212">
    <property type="entry name" value="hemC"/>
    <property type="match status" value="1"/>
</dbReference>
<dbReference type="PANTHER" id="PTHR11557">
    <property type="entry name" value="PORPHOBILINOGEN DEAMINASE"/>
    <property type="match status" value="1"/>
</dbReference>
<dbReference type="PANTHER" id="PTHR11557:SF0">
    <property type="entry name" value="PORPHOBILINOGEN DEAMINASE"/>
    <property type="match status" value="1"/>
</dbReference>
<dbReference type="Pfam" id="PF01379">
    <property type="entry name" value="Porphobil_deam"/>
    <property type="match status" value="1"/>
</dbReference>
<dbReference type="Pfam" id="PF03900">
    <property type="entry name" value="Porphobil_deamC"/>
    <property type="match status" value="1"/>
</dbReference>
<dbReference type="PIRSF" id="PIRSF001438">
    <property type="entry name" value="4pyrrol_synth_OHMeBilane_synth"/>
    <property type="match status" value="1"/>
</dbReference>
<dbReference type="PRINTS" id="PR00151">
    <property type="entry name" value="PORPHBDMNASE"/>
</dbReference>
<dbReference type="SUPFAM" id="SSF53850">
    <property type="entry name" value="Periplasmic binding protein-like II"/>
    <property type="match status" value="1"/>
</dbReference>
<dbReference type="SUPFAM" id="SSF54782">
    <property type="entry name" value="Porphobilinogen deaminase (hydroxymethylbilane synthase), C-terminal domain"/>
    <property type="match status" value="1"/>
</dbReference>
<dbReference type="PROSITE" id="PS00533">
    <property type="entry name" value="PORPHOBILINOGEN_DEAM"/>
    <property type="match status" value="1"/>
</dbReference>
<organism>
    <name type="scientific">Trichlorobacter lovleyi (strain ATCC BAA-1151 / DSM 17278 / SZ)</name>
    <name type="common">Geobacter lovleyi</name>
    <dbReference type="NCBI Taxonomy" id="398767"/>
    <lineage>
        <taxon>Bacteria</taxon>
        <taxon>Pseudomonadati</taxon>
        <taxon>Thermodesulfobacteriota</taxon>
        <taxon>Desulfuromonadia</taxon>
        <taxon>Geobacterales</taxon>
        <taxon>Geobacteraceae</taxon>
        <taxon>Trichlorobacter</taxon>
    </lineage>
</organism>
<feature type="chain" id="PRO_1000114154" description="Porphobilinogen deaminase">
    <location>
        <begin position="1"/>
        <end position="312"/>
    </location>
</feature>
<feature type="modified residue" description="S-(dipyrrolylmethanemethyl)cysteine" evidence="1">
    <location>
        <position position="241"/>
    </location>
</feature>